<gene>
    <name type="primary">twk-9</name>
    <name type="ORF">ZK1251.8</name>
</gene>
<accession>Q23435</accession>
<feature type="chain" id="PRO_0000101772" description="TWiK family of potassium channels protein 9">
    <location>
        <begin position="1"/>
        <end position="568"/>
    </location>
</feature>
<feature type="topological domain" description="Cytoplasmic" evidence="1">
    <location>
        <begin position="1"/>
        <end position="15"/>
    </location>
</feature>
<feature type="transmembrane region" description="Helical" evidence="1">
    <location>
        <begin position="16"/>
        <end position="36"/>
    </location>
</feature>
<feature type="intramembrane region" description="Pore-forming; Name=Pore-forming 1" evidence="1">
    <location>
        <begin position="163"/>
        <end position="183"/>
    </location>
</feature>
<feature type="transmembrane region" description="Helical" evidence="1">
    <location>
        <begin position="191"/>
        <end position="211"/>
    </location>
</feature>
<feature type="topological domain" description="Cytoplasmic" evidence="1">
    <location>
        <begin position="212"/>
        <end position="316"/>
    </location>
</feature>
<feature type="transmembrane region" description="Helical" evidence="1">
    <location>
        <begin position="317"/>
        <end position="337"/>
    </location>
</feature>
<feature type="intramembrane region" description="Pore-forming; Name=Pore-forming 2" evidence="1">
    <location>
        <begin position="343"/>
        <end position="363"/>
    </location>
</feature>
<feature type="transmembrane region" description="Helical" evidence="1">
    <location>
        <begin position="370"/>
        <end position="390"/>
    </location>
</feature>
<feature type="topological domain" description="Cytoplasmic" evidence="1">
    <location>
        <begin position="391"/>
        <end position="568"/>
    </location>
</feature>
<feature type="region of interest" description="Disordered" evidence="2">
    <location>
        <begin position="243"/>
        <end position="262"/>
    </location>
</feature>
<feature type="region of interest" description="Disordered" evidence="2">
    <location>
        <begin position="274"/>
        <end position="314"/>
    </location>
</feature>
<feature type="compositionally biased region" description="Acidic residues" evidence="2">
    <location>
        <begin position="297"/>
        <end position="307"/>
    </location>
</feature>
<organism>
    <name type="scientific">Caenorhabditis elegans</name>
    <dbReference type="NCBI Taxonomy" id="6239"/>
    <lineage>
        <taxon>Eukaryota</taxon>
        <taxon>Metazoa</taxon>
        <taxon>Ecdysozoa</taxon>
        <taxon>Nematoda</taxon>
        <taxon>Chromadorea</taxon>
        <taxon>Rhabditida</taxon>
        <taxon>Rhabditina</taxon>
        <taxon>Rhabditomorpha</taxon>
        <taxon>Rhabditoidea</taxon>
        <taxon>Rhabditidae</taxon>
        <taxon>Peloderinae</taxon>
        <taxon>Caenorhabditis</taxon>
    </lineage>
</organism>
<name>TWK9_CAEEL</name>
<comment type="function">
    <text evidence="4">Potassium channel protein that may be component of regulatory network that controls ray development and function.</text>
</comment>
<comment type="subcellular location">
    <subcellularLocation>
        <location evidence="5">Membrane</location>
        <topology evidence="5">Multi-pass membrane protein</topology>
    </subcellularLocation>
</comment>
<comment type="tissue specificity">
    <text evidence="3">Expressed in ray A-type neurons and cell bodies. Also seen in head, pharyngeal and phasmid neurons, and in coelomocytes.</text>
</comment>
<comment type="similarity">
    <text evidence="1">Belongs to the two pore domain potassium channel (TC 1.A.1.8) family.</text>
</comment>
<proteinExistence type="evidence at transcript level"/>
<keyword id="KW-0407">Ion channel</keyword>
<keyword id="KW-0406">Ion transport</keyword>
<keyword id="KW-0472">Membrane</keyword>
<keyword id="KW-0630">Potassium</keyword>
<keyword id="KW-0631">Potassium channel</keyword>
<keyword id="KW-0633">Potassium transport</keyword>
<keyword id="KW-1185">Reference proteome</keyword>
<keyword id="KW-0812">Transmembrane</keyword>
<keyword id="KW-1133">Transmembrane helix</keyword>
<keyword id="KW-0813">Transport</keyword>
<evidence type="ECO:0000255" key="1"/>
<evidence type="ECO:0000256" key="2">
    <source>
        <dbReference type="SAM" id="MobiDB-lite"/>
    </source>
</evidence>
<evidence type="ECO:0000269" key="3">
    <source>
    </source>
</evidence>
<evidence type="ECO:0000303" key="4">
    <source>
    </source>
</evidence>
<evidence type="ECO:0000305" key="5"/>
<reference key="1">
    <citation type="journal article" date="1998" name="Science">
        <title>Genome sequence of the nematode C. elegans: a platform for investigating biology.</title>
        <authorList>
            <consortium name="The C. elegans sequencing consortium"/>
        </authorList>
    </citation>
    <scope>NUCLEOTIDE SEQUENCE [LARGE SCALE GENOMIC DNA]</scope>
    <source>
        <strain>Bristol N2</strain>
    </source>
</reference>
<reference evidence="5" key="2">
    <citation type="journal article" date="2004" name="Dev. Biol.">
        <title>Identification of C. elegans sensory ray genes using whole-genome expression profiling.</title>
        <authorList>
            <person name="Portman D.S."/>
            <person name="Emmons S.W."/>
        </authorList>
    </citation>
    <scope>TISSUE SPECIFICITY</scope>
</reference>
<protein>
    <recommendedName>
        <fullName>TWiK family of potassium channels protein 9</fullName>
    </recommendedName>
</protein>
<dbReference type="EMBL" id="Z68222">
    <property type="protein sequence ID" value="CAA92504.2"/>
    <property type="molecule type" value="Genomic_DNA"/>
</dbReference>
<dbReference type="PIR" id="T27725">
    <property type="entry name" value="T27725"/>
</dbReference>
<dbReference type="RefSeq" id="NP_501724.2">
    <property type="nucleotide sequence ID" value="NM_069323.3"/>
</dbReference>
<dbReference type="STRING" id="6239.ZK1251.8a.1"/>
<dbReference type="TCDB" id="1.A.1.9.8">
    <property type="family name" value="the voltage-gated ion channel (vic) superfamily"/>
</dbReference>
<dbReference type="PaxDb" id="6239-ZK1251.8"/>
<dbReference type="EnsemblMetazoa" id="ZK1251.8a.1">
    <property type="protein sequence ID" value="ZK1251.8a.1"/>
    <property type="gene ID" value="WBGene00006664"/>
</dbReference>
<dbReference type="GeneID" id="177803"/>
<dbReference type="KEGG" id="cel:CELE_ZK1251.8"/>
<dbReference type="UCSC" id="ZK1251.8">
    <property type="organism name" value="c. elegans"/>
</dbReference>
<dbReference type="AGR" id="WB:WBGene00006664"/>
<dbReference type="CTD" id="177803"/>
<dbReference type="WormBase" id="ZK1251.8a">
    <property type="protein sequence ID" value="CE40540"/>
    <property type="gene ID" value="WBGene00006664"/>
    <property type="gene designation" value="twk-9"/>
</dbReference>
<dbReference type="eggNOG" id="KOG1418">
    <property type="taxonomic scope" value="Eukaryota"/>
</dbReference>
<dbReference type="InParanoid" id="Q23435"/>
<dbReference type="OMA" id="LSMQWLE"/>
<dbReference type="OrthoDB" id="297496at2759"/>
<dbReference type="PhylomeDB" id="Q23435"/>
<dbReference type="PRO" id="PR:Q23435"/>
<dbReference type="Proteomes" id="UP000001940">
    <property type="component" value="Chromosome IV"/>
</dbReference>
<dbReference type="Bgee" id="WBGene00006664">
    <property type="expression patterns" value="Expressed in larva and 2 other cell types or tissues"/>
</dbReference>
<dbReference type="ExpressionAtlas" id="Q23435">
    <property type="expression patterns" value="baseline and differential"/>
</dbReference>
<dbReference type="GO" id="GO:0005886">
    <property type="term" value="C:plasma membrane"/>
    <property type="evidence" value="ECO:0000318"/>
    <property type="project" value="GO_Central"/>
</dbReference>
<dbReference type="GO" id="GO:0015271">
    <property type="term" value="F:outward rectifier potassium channel activity"/>
    <property type="evidence" value="ECO:0000318"/>
    <property type="project" value="GO_Central"/>
</dbReference>
<dbReference type="GO" id="GO:0022841">
    <property type="term" value="F:potassium ion leak channel activity"/>
    <property type="evidence" value="ECO:0000318"/>
    <property type="project" value="GO_Central"/>
</dbReference>
<dbReference type="GO" id="GO:0071805">
    <property type="term" value="P:potassium ion transmembrane transport"/>
    <property type="evidence" value="ECO:0000318"/>
    <property type="project" value="GO_Central"/>
</dbReference>
<dbReference type="Gene3D" id="1.10.287.70">
    <property type="match status" value="1"/>
</dbReference>
<dbReference type="InterPro" id="IPR003280">
    <property type="entry name" value="2pore_dom_K_chnl"/>
</dbReference>
<dbReference type="InterPro" id="IPR013099">
    <property type="entry name" value="K_chnl_dom"/>
</dbReference>
<dbReference type="PANTHER" id="PTHR11003">
    <property type="entry name" value="POTASSIUM CHANNEL, SUBFAMILY K"/>
    <property type="match status" value="1"/>
</dbReference>
<dbReference type="PANTHER" id="PTHR11003:SF273">
    <property type="entry name" value="TWIK FAMILY OF POTASSIUM CHANNELS PROTEIN 9"/>
    <property type="match status" value="1"/>
</dbReference>
<dbReference type="Pfam" id="PF07885">
    <property type="entry name" value="Ion_trans_2"/>
    <property type="match status" value="2"/>
</dbReference>
<dbReference type="PRINTS" id="PR01333">
    <property type="entry name" value="2POREKCHANEL"/>
</dbReference>
<dbReference type="SUPFAM" id="SSF81324">
    <property type="entry name" value="Voltage-gated potassium channels"/>
    <property type="match status" value="2"/>
</dbReference>
<sequence length="568" mass="64533">MKCSFHIPEKYQWASTLFVHVALIAGVAVYTVFGALSMQWLESPDRVRALLKRELKPVESLPPPPSISGLPDRITRVYLGEELAILDPGVHECLERTILTLFHDTKCDPYSFEHLNIELIDRCYAEANVPIPEGYGGQPRKKIKNKEEEKDVIDETPAEKWSIGNSVIFAFTVITTIGYGHVAPETFEGRLFLIFYGVIGVPFTLLTIADLGMFLTRFLKNLLTMARRFAHYLVKLYQKAKKQRNKSQKTSPVMPDSERSEVWNTGKEMKEMSMRTAREPGEGDEIEVIENGNDENGKEEDEEEPENNEPRKTEESIALGITFTCYLVAGAKILSVYEPEMDFFKALYFNFVTLTTIGLGDFVPKSFDYLLITLIYIGIGLALTTMAIEIAADLLKKLHYIGRKMENVGQAVVWFGGKKMTMKSLVKHLGDQFNIPEEELANFDMSAFVDNAIKVEKGEIATLRKPPTPPVVFRERAFSFSNVRNSSESALKYVDDNRFSKTTQPTIYTVIIHETTRTIDTLHNLADAIRRDPSIPRLDLDVHYLTDMSAPTSFDENYLRTYTNARRK</sequence>